<accession>A8LJ26</accession>
<feature type="chain" id="PRO_0000367178" description="UPF0173 metal-dependent hydrolase Dshi_2788">
    <location>
        <begin position="1"/>
        <end position="230"/>
    </location>
</feature>
<proteinExistence type="inferred from homology"/>
<protein>
    <recommendedName>
        <fullName evidence="1">UPF0173 metal-dependent hydrolase Dshi_2788</fullName>
    </recommendedName>
</protein>
<reference key="1">
    <citation type="journal article" date="2010" name="ISME J.">
        <title>The complete genome sequence of the algal symbiont Dinoroseobacter shibae: a hitchhiker's guide to life in the sea.</title>
        <authorList>
            <person name="Wagner-Dobler I."/>
            <person name="Ballhausen B."/>
            <person name="Berger M."/>
            <person name="Brinkhoff T."/>
            <person name="Buchholz I."/>
            <person name="Bunk B."/>
            <person name="Cypionka H."/>
            <person name="Daniel R."/>
            <person name="Drepper T."/>
            <person name="Gerdts G."/>
            <person name="Hahnke S."/>
            <person name="Han C."/>
            <person name="Jahn D."/>
            <person name="Kalhoefer D."/>
            <person name="Kiss H."/>
            <person name="Klenk H.P."/>
            <person name="Kyrpides N."/>
            <person name="Liebl W."/>
            <person name="Liesegang H."/>
            <person name="Meincke L."/>
            <person name="Pati A."/>
            <person name="Petersen J."/>
            <person name="Piekarski T."/>
            <person name="Pommerenke C."/>
            <person name="Pradella S."/>
            <person name="Pukall R."/>
            <person name="Rabus R."/>
            <person name="Stackebrandt E."/>
            <person name="Thole S."/>
            <person name="Thompson L."/>
            <person name="Tielen P."/>
            <person name="Tomasch J."/>
            <person name="von Jan M."/>
            <person name="Wanphrut N."/>
            <person name="Wichels A."/>
            <person name="Zech H."/>
            <person name="Simon M."/>
        </authorList>
    </citation>
    <scope>NUCLEOTIDE SEQUENCE [LARGE SCALE GENOMIC DNA]</scope>
    <source>
        <strain>DSM 16493 / NCIMB 14021 / DFL 12</strain>
    </source>
</reference>
<gene>
    <name type="ordered locus">Dshi_2788</name>
</gene>
<evidence type="ECO:0000255" key="1">
    <source>
        <dbReference type="HAMAP-Rule" id="MF_00457"/>
    </source>
</evidence>
<name>Y2788_DINSH</name>
<organism>
    <name type="scientific">Dinoroseobacter shibae (strain DSM 16493 / NCIMB 14021 / DFL 12)</name>
    <dbReference type="NCBI Taxonomy" id="398580"/>
    <lineage>
        <taxon>Bacteria</taxon>
        <taxon>Pseudomonadati</taxon>
        <taxon>Pseudomonadota</taxon>
        <taxon>Alphaproteobacteria</taxon>
        <taxon>Rhodobacterales</taxon>
        <taxon>Roseobacteraceae</taxon>
        <taxon>Dinoroseobacter</taxon>
    </lineage>
</organism>
<sequence>MKITWMGHGSFRIEIADQVLLIDPWITGNPVFPADRRDAALAGATHILITHGHGDHTADAVALSKELGAPIVGIYDLMSYWAETEGVETVGFNKGGTVMLGDVAVTMVNAVHSSSLGTDHGPMYAGAEAGFMIKGEGRTVYVSGDTDVMADMKVFNDLHQPEIGILASGGHFTMDMERAAYAARTFFDFKTVIPCHYKTFPLLAQSAQPLIDGLPGTDVRTPEVMETIEL</sequence>
<keyword id="KW-0378">Hydrolase</keyword>
<keyword id="KW-1185">Reference proteome</keyword>
<dbReference type="EMBL" id="CP000830">
    <property type="protein sequence ID" value="ABV94521.1"/>
    <property type="molecule type" value="Genomic_DNA"/>
</dbReference>
<dbReference type="RefSeq" id="WP_012179449.1">
    <property type="nucleotide sequence ID" value="NC_009952.1"/>
</dbReference>
<dbReference type="SMR" id="A8LJ26"/>
<dbReference type="STRING" id="398580.Dshi_2788"/>
<dbReference type="KEGG" id="dsh:Dshi_2788"/>
<dbReference type="eggNOG" id="COG2220">
    <property type="taxonomic scope" value="Bacteria"/>
</dbReference>
<dbReference type="HOGENOM" id="CLU_070010_4_0_5"/>
<dbReference type="OrthoDB" id="9789133at2"/>
<dbReference type="Proteomes" id="UP000006833">
    <property type="component" value="Chromosome"/>
</dbReference>
<dbReference type="GO" id="GO:0016787">
    <property type="term" value="F:hydrolase activity"/>
    <property type="evidence" value="ECO:0007669"/>
    <property type="project" value="UniProtKB-UniRule"/>
</dbReference>
<dbReference type="Gene3D" id="3.60.15.10">
    <property type="entry name" value="Ribonuclease Z/Hydroxyacylglutathione hydrolase-like"/>
    <property type="match status" value="1"/>
</dbReference>
<dbReference type="HAMAP" id="MF_00457">
    <property type="entry name" value="UPF0173"/>
    <property type="match status" value="1"/>
</dbReference>
<dbReference type="InterPro" id="IPR001279">
    <property type="entry name" value="Metallo-B-lactamas"/>
</dbReference>
<dbReference type="InterPro" id="IPR036866">
    <property type="entry name" value="RibonucZ/Hydroxyglut_hydro"/>
</dbReference>
<dbReference type="InterPro" id="IPR022877">
    <property type="entry name" value="UPF0173"/>
</dbReference>
<dbReference type="InterPro" id="IPR050114">
    <property type="entry name" value="UPF0173_UPF0282_UlaG_hydrolase"/>
</dbReference>
<dbReference type="NCBIfam" id="NF001911">
    <property type="entry name" value="PRK00685.1"/>
    <property type="match status" value="1"/>
</dbReference>
<dbReference type="PANTHER" id="PTHR43546:SF3">
    <property type="entry name" value="UPF0173 METAL-DEPENDENT HYDROLASE MJ1163"/>
    <property type="match status" value="1"/>
</dbReference>
<dbReference type="PANTHER" id="PTHR43546">
    <property type="entry name" value="UPF0173 METAL-DEPENDENT HYDROLASE MJ1163-RELATED"/>
    <property type="match status" value="1"/>
</dbReference>
<dbReference type="Pfam" id="PF12706">
    <property type="entry name" value="Lactamase_B_2"/>
    <property type="match status" value="1"/>
</dbReference>
<dbReference type="SMART" id="SM00849">
    <property type="entry name" value="Lactamase_B"/>
    <property type="match status" value="1"/>
</dbReference>
<dbReference type="SUPFAM" id="SSF56281">
    <property type="entry name" value="Metallo-hydrolase/oxidoreductase"/>
    <property type="match status" value="1"/>
</dbReference>
<comment type="similarity">
    <text evidence="1">Belongs to the UPF0173 family.</text>
</comment>